<name>PUR5_BURMS</name>
<protein>
    <recommendedName>
        <fullName evidence="1">Phosphoribosylformylglycinamidine cyclo-ligase</fullName>
        <ecNumber evidence="1">6.3.3.1</ecNumber>
    </recommendedName>
    <alternativeName>
        <fullName evidence="1">AIR synthase</fullName>
    </alternativeName>
    <alternativeName>
        <fullName evidence="1">AIRS</fullName>
    </alternativeName>
    <alternativeName>
        <fullName evidence="1">Phosphoribosyl-aminoimidazole synthetase</fullName>
    </alternativeName>
</protein>
<reference key="1">
    <citation type="journal article" date="2010" name="Genome Biol. Evol.">
        <title>Continuing evolution of Burkholderia mallei through genome reduction and large-scale rearrangements.</title>
        <authorList>
            <person name="Losada L."/>
            <person name="Ronning C.M."/>
            <person name="DeShazer D."/>
            <person name="Woods D."/>
            <person name="Fedorova N."/>
            <person name="Kim H.S."/>
            <person name="Shabalina S.A."/>
            <person name="Pearson T.R."/>
            <person name="Brinkac L."/>
            <person name="Tan P."/>
            <person name="Nandi T."/>
            <person name="Crabtree J."/>
            <person name="Badger J."/>
            <person name="Beckstrom-Sternberg S."/>
            <person name="Saqib M."/>
            <person name="Schutzer S.E."/>
            <person name="Keim P."/>
            <person name="Nierman W.C."/>
        </authorList>
    </citation>
    <scope>NUCLEOTIDE SEQUENCE [LARGE SCALE GENOMIC DNA]</scope>
    <source>
        <strain>SAVP1</strain>
    </source>
</reference>
<evidence type="ECO:0000255" key="1">
    <source>
        <dbReference type="HAMAP-Rule" id="MF_00741"/>
    </source>
</evidence>
<dbReference type="EC" id="6.3.3.1" evidence="1"/>
<dbReference type="EMBL" id="CP000526">
    <property type="protein sequence ID" value="ABM52146.1"/>
    <property type="molecule type" value="Genomic_DNA"/>
</dbReference>
<dbReference type="RefSeq" id="WP_004194386.1">
    <property type="nucleotide sequence ID" value="NC_008785.1"/>
</dbReference>
<dbReference type="SMR" id="A1V0V7"/>
<dbReference type="GeneID" id="93061406"/>
<dbReference type="KEGG" id="bmv:BMASAVP1_A0511"/>
<dbReference type="HOGENOM" id="CLU_047116_0_0_4"/>
<dbReference type="UniPathway" id="UPA00074">
    <property type="reaction ID" value="UER00129"/>
</dbReference>
<dbReference type="GO" id="GO:0005829">
    <property type="term" value="C:cytosol"/>
    <property type="evidence" value="ECO:0007669"/>
    <property type="project" value="TreeGrafter"/>
</dbReference>
<dbReference type="GO" id="GO:0005524">
    <property type="term" value="F:ATP binding"/>
    <property type="evidence" value="ECO:0007669"/>
    <property type="project" value="UniProtKB-KW"/>
</dbReference>
<dbReference type="GO" id="GO:0004637">
    <property type="term" value="F:phosphoribosylamine-glycine ligase activity"/>
    <property type="evidence" value="ECO:0007669"/>
    <property type="project" value="TreeGrafter"/>
</dbReference>
<dbReference type="GO" id="GO:0004641">
    <property type="term" value="F:phosphoribosylformylglycinamidine cyclo-ligase activity"/>
    <property type="evidence" value="ECO:0007669"/>
    <property type="project" value="UniProtKB-UniRule"/>
</dbReference>
<dbReference type="GO" id="GO:0006189">
    <property type="term" value="P:'de novo' IMP biosynthetic process"/>
    <property type="evidence" value="ECO:0007669"/>
    <property type="project" value="UniProtKB-UniRule"/>
</dbReference>
<dbReference type="GO" id="GO:0046084">
    <property type="term" value="P:adenine biosynthetic process"/>
    <property type="evidence" value="ECO:0007669"/>
    <property type="project" value="TreeGrafter"/>
</dbReference>
<dbReference type="CDD" id="cd02196">
    <property type="entry name" value="PurM"/>
    <property type="match status" value="1"/>
</dbReference>
<dbReference type="FunFam" id="3.30.1330.10:FF:000001">
    <property type="entry name" value="Phosphoribosylformylglycinamidine cyclo-ligase"/>
    <property type="match status" value="1"/>
</dbReference>
<dbReference type="FunFam" id="3.90.650.10:FF:000001">
    <property type="entry name" value="Phosphoribosylformylglycinamidine cyclo-ligase"/>
    <property type="match status" value="1"/>
</dbReference>
<dbReference type="Gene3D" id="3.90.650.10">
    <property type="entry name" value="PurM-like C-terminal domain"/>
    <property type="match status" value="1"/>
</dbReference>
<dbReference type="Gene3D" id="3.30.1330.10">
    <property type="entry name" value="PurM-like, N-terminal domain"/>
    <property type="match status" value="1"/>
</dbReference>
<dbReference type="HAMAP" id="MF_00741">
    <property type="entry name" value="AIRS"/>
    <property type="match status" value="1"/>
</dbReference>
<dbReference type="InterPro" id="IPR010918">
    <property type="entry name" value="PurM-like_C_dom"/>
</dbReference>
<dbReference type="InterPro" id="IPR036676">
    <property type="entry name" value="PurM-like_C_sf"/>
</dbReference>
<dbReference type="InterPro" id="IPR016188">
    <property type="entry name" value="PurM-like_N"/>
</dbReference>
<dbReference type="InterPro" id="IPR036921">
    <property type="entry name" value="PurM-like_N_sf"/>
</dbReference>
<dbReference type="InterPro" id="IPR004733">
    <property type="entry name" value="PurM_cligase"/>
</dbReference>
<dbReference type="NCBIfam" id="TIGR00878">
    <property type="entry name" value="purM"/>
    <property type="match status" value="1"/>
</dbReference>
<dbReference type="PANTHER" id="PTHR10520:SF12">
    <property type="entry name" value="TRIFUNCTIONAL PURINE BIOSYNTHETIC PROTEIN ADENOSINE-3"/>
    <property type="match status" value="1"/>
</dbReference>
<dbReference type="PANTHER" id="PTHR10520">
    <property type="entry name" value="TRIFUNCTIONAL PURINE BIOSYNTHETIC PROTEIN ADENOSINE-3-RELATED"/>
    <property type="match status" value="1"/>
</dbReference>
<dbReference type="Pfam" id="PF00586">
    <property type="entry name" value="AIRS"/>
    <property type="match status" value="1"/>
</dbReference>
<dbReference type="Pfam" id="PF02769">
    <property type="entry name" value="AIRS_C"/>
    <property type="match status" value="1"/>
</dbReference>
<dbReference type="SUPFAM" id="SSF56042">
    <property type="entry name" value="PurM C-terminal domain-like"/>
    <property type="match status" value="1"/>
</dbReference>
<dbReference type="SUPFAM" id="SSF55326">
    <property type="entry name" value="PurM N-terminal domain-like"/>
    <property type="match status" value="1"/>
</dbReference>
<sequence length="351" mass="36913">MNPPKSAPDAQGLSYRDAGVDIDAGDALVDKIKPFAKKTLRDGVLGGIGGFGALFEVPKKYREPVLVSGTDGVGTKLKLAFHLNKHDTVGQDLVAMSVNDILVQGAEPLFFLDYFACGKLDVETAATVVKGIATGCELAGCALIGGETAEMPGMYPDGEYDLAGFAVGAVEKSKIIDGSTIAEGDVVLGLASSGIHSNGFSLVRKIIERANPDLSADFHGRSLADALMAPTRIYVKPLLALMEKIAVKGMAHITGGGLVENIPRVLRDGLTAELDQHAWPLPPLFQWLQQHGGVADAEMHRVFNCGIGMAVIVSAADADDALRQLADAGEQVWKIGTVRASREGEAQTVVV</sequence>
<accession>A1V0V7</accession>
<proteinExistence type="inferred from homology"/>
<organism>
    <name type="scientific">Burkholderia mallei (strain SAVP1)</name>
    <dbReference type="NCBI Taxonomy" id="320388"/>
    <lineage>
        <taxon>Bacteria</taxon>
        <taxon>Pseudomonadati</taxon>
        <taxon>Pseudomonadota</taxon>
        <taxon>Betaproteobacteria</taxon>
        <taxon>Burkholderiales</taxon>
        <taxon>Burkholderiaceae</taxon>
        <taxon>Burkholderia</taxon>
        <taxon>pseudomallei group</taxon>
    </lineage>
</organism>
<feature type="chain" id="PRO_1000046428" description="Phosphoribosylformylglycinamidine cyclo-ligase">
    <location>
        <begin position="1"/>
        <end position="351"/>
    </location>
</feature>
<comment type="catalytic activity">
    <reaction evidence="1">
        <text>2-formamido-N(1)-(5-O-phospho-beta-D-ribosyl)acetamidine + ATP = 5-amino-1-(5-phospho-beta-D-ribosyl)imidazole + ADP + phosphate + H(+)</text>
        <dbReference type="Rhea" id="RHEA:23032"/>
        <dbReference type="ChEBI" id="CHEBI:15378"/>
        <dbReference type="ChEBI" id="CHEBI:30616"/>
        <dbReference type="ChEBI" id="CHEBI:43474"/>
        <dbReference type="ChEBI" id="CHEBI:137981"/>
        <dbReference type="ChEBI" id="CHEBI:147287"/>
        <dbReference type="ChEBI" id="CHEBI:456216"/>
        <dbReference type="EC" id="6.3.3.1"/>
    </reaction>
</comment>
<comment type="pathway">
    <text evidence="1">Purine metabolism; IMP biosynthesis via de novo pathway; 5-amino-1-(5-phospho-D-ribosyl)imidazole from N(2)-formyl-N(1)-(5-phospho-D-ribosyl)glycinamide: step 2/2.</text>
</comment>
<comment type="subcellular location">
    <subcellularLocation>
        <location evidence="1">Cytoplasm</location>
    </subcellularLocation>
</comment>
<comment type="similarity">
    <text evidence="1">Belongs to the AIR synthase family.</text>
</comment>
<keyword id="KW-0067">ATP-binding</keyword>
<keyword id="KW-0963">Cytoplasm</keyword>
<keyword id="KW-0436">Ligase</keyword>
<keyword id="KW-0547">Nucleotide-binding</keyword>
<keyword id="KW-0658">Purine biosynthesis</keyword>
<gene>
    <name evidence="1" type="primary">purM</name>
    <name type="ordered locus">BMASAVP1_A0511</name>
</gene>